<protein>
    <recommendedName>
        <fullName>Fibrinogen beta chain</fullName>
    </recommendedName>
    <component>
        <recommendedName>
            <fullName>Fibrinopeptide B</fullName>
        </recommendedName>
    </component>
    <component>
        <recommendedName>
            <fullName>Fibrinogen beta chain</fullName>
        </recommendedName>
    </component>
</protein>
<accession>P02677</accession>
<comment type="function">
    <text evidence="1">Cleaved by the protease thrombin to yield monomers which, together with fibrinogen alpha (FGA) and fibrinogen gamma (FGG), polymerize to form an insoluble fibrin matrix. Fibrin has a major function in hemostasis as one of the primary components of blood clots. In addition, functions during the early stages of wound repair to stabilize the lesion and guide cell migration during re-epithelialization. Was originally thought to be essential for platelet aggregation, based on in vitro studies using anticoagulated blood. However subsequent studies have shown that it is not absolutely required for thrombus formation in vivo. Enhances expression of SELP in activated platelets. Maternal fibrinogen is essential for successful pregnancy. Fibrin deposition is also associated with infection, where it protects against IFNG-mediated hemorrhage. May also facilitate the antibacterial immune response via both innate and T-cell mediated pathways.</text>
</comment>
<comment type="subunit">
    <text evidence="2">Heterohexamer; disulfide linked. Contains 2 sets of 3 non-identical chains (alpha, beta and gamma). The 2 heterotrimers are in head to head conformation with the N-termini in a small central domain (By similarity).</text>
</comment>
<comment type="subcellular location">
    <subcellularLocation>
        <location evidence="4">Secreted</location>
    </subcellularLocation>
</comment>
<comment type="domain">
    <text evidence="2">A long coiled coil structure formed by 3 polypeptide chains connects the central nodule to the C-terminal domains (distal nodules). The long C-terminal ends of the alpha chains fold back, contributing a fourth strand to the coiled coil structure.</text>
</comment>
<comment type="PTM">
    <text>Conversion of fibrinogen to fibrin is triggered by thrombin, which cleaves fibrinopeptides A and B from alpha and beta chains, and thus exposes the N-terminal polymerization sites responsible for the formation of the soft clot.</text>
</comment>
<feature type="peptide" id="PRO_0000009059" description="Fibrinopeptide B">
    <location>
        <begin position="1"/>
        <end position="19"/>
    </location>
</feature>
<feature type="chain" id="PRO_0000009060" description="Fibrinogen beta chain">
    <location>
        <begin position="20"/>
        <end position="31" status="greater than"/>
    </location>
</feature>
<feature type="region of interest" description="Disordered" evidence="3">
    <location>
        <begin position="1"/>
        <end position="31"/>
    </location>
</feature>
<feature type="compositionally biased region" description="Acidic residues" evidence="3">
    <location>
        <begin position="1"/>
        <end position="10"/>
    </location>
</feature>
<feature type="compositionally biased region" description="Basic and acidic residues" evidence="3">
    <location>
        <begin position="18"/>
        <end position="31"/>
    </location>
</feature>
<feature type="modified residue" description="Sulfotyrosine; partial" evidence="5">
    <location>
        <position position="2"/>
    </location>
</feature>
<feature type="modified residue" description="Sulfotyrosine" evidence="5">
    <location>
        <position position="3"/>
    </location>
</feature>
<feature type="non-terminal residue">
    <location>
        <position position="31"/>
    </location>
</feature>
<dbReference type="PIR" id="B94308">
    <property type="entry name" value="A05297"/>
</dbReference>
<dbReference type="FunCoup" id="P02677">
    <property type="interactions" value="47"/>
</dbReference>
<dbReference type="STRING" id="9615.ENSCAFP00000012386"/>
<dbReference type="InParanoid" id="P02677"/>
<dbReference type="OrthoDB" id="9930906at2759"/>
<dbReference type="Proteomes" id="UP000002254">
    <property type="component" value="Unplaced"/>
</dbReference>
<dbReference type="Proteomes" id="UP000694429">
    <property type="component" value="Unplaced"/>
</dbReference>
<dbReference type="Proteomes" id="UP000694542">
    <property type="component" value="Unplaced"/>
</dbReference>
<dbReference type="Proteomes" id="UP000805418">
    <property type="component" value="Unplaced"/>
</dbReference>
<dbReference type="GO" id="GO:0005576">
    <property type="term" value="C:extracellular region"/>
    <property type="evidence" value="ECO:0007669"/>
    <property type="project" value="UniProtKB-SubCell"/>
</dbReference>
<dbReference type="GO" id="GO:0002250">
    <property type="term" value="P:adaptive immune response"/>
    <property type="evidence" value="ECO:0007669"/>
    <property type="project" value="UniProtKB-KW"/>
</dbReference>
<dbReference type="GO" id="GO:0007596">
    <property type="term" value="P:blood coagulation"/>
    <property type="evidence" value="ECO:0007669"/>
    <property type="project" value="UniProtKB-KW"/>
</dbReference>
<dbReference type="GO" id="GO:0045087">
    <property type="term" value="P:innate immune response"/>
    <property type="evidence" value="ECO:0007669"/>
    <property type="project" value="UniProtKB-KW"/>
</dbReference>
<evidence type="ECO:0000250" key="1">
    <source>
        <dbReference type="UniProtKB" id="E9PV24"/>
    </source>
</evidence>
<evidence type="ECO:0000250" key="2">
    <source>
        <dbReference type="UniProtKB" id="P02675"/>
    </source>
</evidence>
<evidence type="ECO:0000256" key="3">
    <source>
        <dbReference type="SAM" id="MobiDB-lite"/>
    </source>
</evidence>
<evidence type="ECO:0000269" key="4">
    <source>
    </source>
</evidence>
<evidence type="ECO:0000269" key="5">
    <source>
    </source>
</evidence>
<reference key="1">
    <citation type="journal article" date="1975" name="Thromb. Res.">
        <title>Studies of the structure of canine fibrinogen.</title>
        <authorList>
            <person name="Birken S."/>
            <person name="Wilner G.D."/>
            <person name="Canfield R.E."/>
        </authorList>
    </citation>
    <scope>PROTEIN SEQUENCE</scope>
    <scope>SUBCELLULAR LOCATION</scope>
</reference>
<reference key="2">
    <citation type="journal article" date="1965" name="Acta Chem. Scand.">
        <title>Studies on fibrinopeptides from mammals.</title>
        <authorList>
            <person name="Blombaeck B."/>
            <person name="Blombaeck M."/>
            <person name="Grondahl N.J."/>
        </authorList>
    </citation>
    <scope>PROTEIN SEQUENCE OF 1-19</scope>
</reference>
<reference key="3">
    <citation type="journal article" date="1968" name="Acta Chem. Scand.">
        <title>The location of tyrosine-O-sulphate in fibrinopeptides.</title>
        <authorList>
            <person name="Krajewski T."/>
            <person name="Blombaeck B."/>
        </authorList>
    </citation>
    <scope>PROTEIN SEQUENCE OF 1-19</scope>
    <scope>SULFATION AT TYR-2 AND TYR-3</scope>
</reference>
<name>FIBB_CANLF</name>
<sequence>HYYDDTDEEERIVSTVDARGHRPLDKKREEA</sequence>
<gene>
    <name type="primary">FGB</name>
</gene>
<proteinExistence type="evidence at protein level"/>
<organism>
    <name type="scientific">Canis lupus familiaris</name>
    <name type="common">Dog</name>
    <name type="synonym">Canis familiaris</name>
    <dbReference type="NCBI Taxonomy" id="9615"/>
    <lineage>
        <taxon>Eukaryota</taxon>
        <taxon>Metazoa</taxon>
        <taxon>Chordata</taxon>
        <taxon>Craniata</taxon>
        <taxon>Vertebrata</taxon>
        <taxon>Euteleostomi</taxon>
        <taxon>Mammalia</taxon>
        <taxon>Eutheria</taxon>
        <taxon>Laurasiatheria</taxon>
        <taxon>Carnivora</taxon>
        <taxon>Caniformia</taxon>
        <taxon>Canidae</taxon>
        <taxon>Canis</taxon>
    </lineage>
</organism>
<keyword id="KW-1064">Adaptive immunity</keyword>
<keyword id="KW-0094">Blood coagulation</keyword>
<keyword id="KW-0175">Coiled coil</keyword>
<keyword id="KW-0903">Direct protein sequencing</keyword>
<keyword id="KW-1015">Disulfide bond</keyword>
<keyword id="KW-0356">Hemostasis</keyword>
<keyword id="KW-0391">Immunity</keyword>
<keyword id="KW-0399">Innate immunity</keyword>
<keyword id="KW-1185">Reference proteome</keyword>
<keyword id="KW-0964">Secreted</keyword>
<keyword id="KW-0765">Sulfation</keyword>